<dbReference type="EC" id="3.6.5.3" evidence="2"/>
<dbReference type="EMBL" id="CP000485">
    <property type="protein sequence ID" value="ABK83521.1"/>
    <property type="molecule type" value="Genomic_DNA"/>
</dbReference>
<dbReference type="RefSeq" id="WP_001029614.1">
    <property type="nucleotide sequence ID" value="NC_008600.1"/>
</dbReference>
<dbReference type="SMR" id="A0R8H8"/>
<dbReference type="GeneID" id="93010945"/>
<dbReference type="KEGG" id="btl:BALH_0106"/>
<dbReference type="HOGENOM" id="CLU_007265_0_1_9"/>
<dbReference type="GO" id="GO:0005829">
    <property type="term" value="C:cytosol"/>
    <property type="evidence" value="ECO:0007669"/>
    <property type="project" value="TreeGrafter"/>
</dbReference>
<dbReference type="GO" id="GO:0005525">
    <property type="term" value="F:GTP binding"/>
    <property type="evidence" value="ECO:0007669"/>
    <property type="project" value="UniProtKB-UniRule"/>
</dbReference>
<dbReference type="GO" id="GO:0003924">
    <property type="term" value="F:GTPase activity"/>
    <property type="evidence" value="ECO:0007669"/>
    <property type="project" value="InterPro"/>
</dbReference>
<dbReference type="GO" id="GO:0003746">
    <property type="term" value="F:translation elongation factor activity"/>
    <property type="evidence" value="ECO:0007669"/>
    <property type="project" value="UniProtKB-UniRule"/>
</dbReference>
<dbReference type="CDD" id="cd01884">
    <property type="entry name" value="EF_Tu"/>
    <property type="match status" value="1"/>
</dbReference>
<dbReference type="CDD" id="cd03697">
    <property type="entry name" value="EFTU_II"/>
    <property type="match status" value="1"/>
</dbReference>
<dbReference type="CDD" id="cd03707">
    <property type="entry name" value="EFTU_III"/>
    <property type="match status" value="1"/>
</dbReference>
<dbReference type="FunFam" id="2.40.30.10:FF:000001">
    <property type="entry name" value="Elongation factor Tu"/>
    <property type="match status" value="1"/>
</dbReference>
<dbReference type="FunFam" id="3.40.50.300:FF:000003">
    <property type="entry name" value="Elongation factor Tu"/>
    <property type="match status" value="1"/>
</dbReference>
<dbReference type="Gene3D" id="3.40.50.300">
    <property type="entry name" value="P-loop containing nucleotide triphosphate hydrolases"/>
    <property type="match status" value="1"/>
</dbReference>
<dbReference type="Gene3D" id="2.40.30.10">
    <property type="entry name" value="Translation factors"/>
    <property type="match status" value="2"/>
</dbReference>
<dbReference type="HAMAP" id="MF_00118_B">
    <property type="entry name" value="EF_Tu_B"/>
    <property type="match status" value="1"/>
</dbReference>
<dbReference type="InterPro" id="IPR041709">
    <property type="entry name" value="EF-Tu_GTP-bd"/>
</dbReference>
<dbReference type="InterPro" id="IPR050055">
    <property type="entry name" value="EF-Tu_GTPase"/>
</dbReference>
<dbReference type="InterPro" id="IPR004161">
    <property type="entry name" value="EFTu-like_2"/>
</dbReference>
<dbReference type="InterPro" id="IPR033720">
    <property type="entry name" value="EFTU_2"/>
</dbReference>
<dbReference type="InterPro" id="IPR031157">
    <property type="entry name" value="G_TR_CS"/>
</dbReference>
<dbReference type="InterPro" id="IPR027417">
    <property type="entry name" value="P-loop_NTPase"/>
</dbReference>
<dbReference type="InterPro" id="IPR005225">
    <property type="entry name" value="Small_GTP-bd"/>
</dbReference>
<dbReference type="InterPro" id="IPR000795">
    <property type="entry name" value="T_Tr_GTP-bd_dom"/>
</dbReference>
<dbReference type="InterPro" id="IPR009000">
    <property type="entry name" value="Transl_B-barrel_sf"/>
</dbReference>
<dbReference type="InterPro" id="IPR009001">
    <property type="entry name" value="Transl_elong_EF1A/Init_IF2_C"/>
</dbReference>
<dbReference type="InterPro" id="IPR004541">
    <property type="entry name" value="Transl_elong_EFTu/EF1A_bac/org"/>
</dbReference>
<dbReference type="InterPro" id="IPR004160">
    <property type="entry name" value="Transl_elong_EFTu/EF1A_C"/>
</dbReference>
<dbReference type="NCBIfam" id="TIGR00485">
    <property type="entry name" value="EF-Tu"/>
    <property type="match status" value="1"/>
</dbReference>
<dbReference type="NCBIfam" id="NF000766">
    <property type="entry name" value="PRK00049.1"/>
    <property type="match status" value="1"/>
</dbReference>
<dbReference type="NCBIfam" id="NF009372">
    <property type="entry name" value="PRK12735.1"/>
    <property type="match status" value="1"/>
</dbReference>
<dbReference type="NCBIfam" id="NF009373">
    <property type="entry name" value="PRK12736.1"/>
    <property type="match status" value="1"/>
</dbReference>
<dbReference type="NCBIfam" id="TIGR00231">
    <property type="entry name" value="small_GTP"/>
    <property type="match status" value="1"/>
</dbReference>
<dbReference type="PANTHER" id="PTHR43721:SF22">
    <property type="entry name" value="ELONGATION FACTOR TU, MITOCHONDRIAL"/>
    <property type="match status" value="1"/>
</dbReference>
<dbReference type="PANTHER" id="PTHR43721">
    <property type="entry name" value="ELONGATION FACTOR TU-RELATED"/>
    <property type="match status" value="1"/>
</dbReference>
<dbReference type="Pfam" id="PF00009">
    <property type="entry name" value="GTP_EFTU"/>
    <property type="match status" value="1"/>
</dbReference>
<dbReference type="Pfam" id="PF03144">
    <property type="entry name" value="GTP_EFTU_D2"/>
    <property type="match status" value="1"/>
</dbReference>
<dbReference type="Pfam" id="PF03143">
    <property type="entry name" value="GTP_EFTU_D3"/>
    <property type="match status" value="1"/>
</dbReference>
<dbReference type="PRINTS" id="PR00315">
    <property type="entry name" value="ELONGATNFCT"/>
</dbReference>
<dbReference type="SUPFAM" id="SSF50465">
    <property type="entry name" value="EF-Tu/eEF-1alpha/eIF2-gamma C-terminal domain"/>
    <property type="match status" value="1"/>
</dbReference>
<dbReference type="SUPFAM" id="SSF52540">
    <property type="entry name" value="P-loop containing nucleoside triphosphate hydrolases"/>
    <property type="match status" value="1"/>
</dbReference>
<dbReference type="SUPFAM" id="SSF50447">
    <property type="entry name" value="Translation proteins"/>
    <property type="match status" value="1"/>
</dbReference>
<dbReference type="PROSITE" id="PS00301">
    <property type="entry name" value="G_TR_1"/>
    <property type="match status" value="1"/>
</dbReference>
<dbReference type="PROSITE" id="PS51722">
    <property type="entry name" value="G_TR_2"/>
    <property type="match status" value="1"/>
</dbReference>
<comment type="function">
    <text evidence="2">GTP hydrolase that promotes the GTP-dependent binding of aminoacyl-tRNA to the A-site of ribosomes during protein biosynthesis.</text>
</comment>
<comment type="catalytic activity">
    <reaction evidence="2">
        <text>GTP + H2O = GDP + phosphate + H(+)</text>
        <dbReference type="Rhea" id="RHEA:19669"/>
        <dbReference type="ChEBI" id="CHEBI:15377"/>
        <dbReference type="ChEBI" id="CHEBI:15378"/>
        <dbReference type="ChEBI" id="CHEBI:37565"/>
        <dbReference type="ChEBI" id="CHEBI:43474"/>
        <dbReference type="ChEBI" id="CHEBI:58189"/>
        <dbReference type="EC" id="3.6.5.3"/>
    </reaction>
    <physiologicalReaction direction="left-to-right" evidence="2">
        <dbReference type="Rhea" id="RHEA:19670"/>
    </physiologicalReaction>
</comment>
<comment type="subunit">
    <text evidence="2">Monomer.</text>
</comment>
<comment type="subcellular location">
    <subcellularLocation>
        <location evidence="2">Cytoplasm</location>
    </subcellularLocation>
</comment>
<comment type="similarity">
    <text evidence="2">Belongs to the TRAFAC class translation factor GTPase superfamily. Classic translation factor GTPase family. EF-Tu/EF-1A subfamily.</text>
</comment>
<proteinExistence type="inferred from homology"/>
<sequence>MAKAKFERSKPHVNIGTIGHVDHGKTTLTAAITTVLAKAGGAEARGYDQIDAAPEERERGITISTAHVEYETETRHYAHVDCPGHADYVKNMITGAAQMDGGILVVSAADGPMPQTREHILLSRQVGVPYIVVFLNKCDMVDDEELLELVEMEVRDLLSEYGFPGDDIPVIKGSALKALQGEADWEAKIIELMAEVDAYIPTPERETDKPFLMPVEDVFSITGRGTVATGRVERGIVKVGDVVEIIGLAEENASTTVTGVEMFRKLLDQAQAGDNIGALLRGVAREDIQRGQVLAKSGSVKAHAKFKAEVFVLSKEEGGRHTPFFANYRPQFYFRTTDVTGIIQLPEGTEMVMPGDNIEMTIELIAPIAIEEGTKFSIREGGRTVGYGVVATIVE</sequence>
<accession>A0R8H8</accession>
<keyword id="KW-0963">Cytoplasm</keyword>
<keyword id="KW-0251">Elongation factor</keyword>
<keyword id="KW-0342">GTP-binding</keyword>
<keyword id="KW-0378">Hydrolase</keyword>
<keyword id="KW-0460">Magnesium</keyword>
<keyword id="KW-0479">Metal-binding</keyword>
<keyword id="KW-0547">Nucleotide-binding</keyword>
<keyword id="KW-0648">Protein biosynthesis</keyword>
<organism>
    <name type="scientific">Bacillus thuringiensis (strain Al Hakam)</name>
    <dbReference type="NCBI Taxonomy" id="412694"/>
    <lineage>
        <taxon>Bacteria</taxon>
        <taxon>Bacillati</taxon>
        <taxon>Bacillota</taxon>
        <taxon>Bacilli</taxon>
        <taxon>Bacillales</taxon>
        <taxon>Bacillaceae</taxon>
        <taxon>Bacillus</taxon>
        <taxon>Bacillus cereus group</taxon>
    </lineage>
</organism>
<gene>
    <name evidence="2" type="primary">tuf</name>
    <name type="ordered locus">BALH_0106</name>
</gene>
<evidence type="ECO:0000250" key="1"/>
<evidence type="ECO:0000255" key="2">
    <source>
        <dbReference type="HAMAP-Rule" id="MF_00118"/>
    </source>
</evidence>
<reference key="1">
    <citation type="journal article" date="2007" name="J. Bacteriol.">
        <title>The complete genome sequence of Bacillus thuringiensis Al Hakam.</title>
        <authorList>
            <person name="Challacombe J.F."/>
            <person name="Altherr M.R."/>
            <person name="Xie G."/>
            <person name="Bhotika S.S."/>
            <person name="Brown N."/>
            <person name="Bruce D."/>
            <person name="Campbell C.S."/>
            <person name="Campbell M.L."/>
            <person name="Chen J."/>
            <person name="Chertkov O."/>
            <person name="Cleland C."/>
            <person name="Dimitrijevic M."/>
            <person name="Doggett N.A."/>
            <person name="Fawcett J.J."/>
            <person name="Glavina T."/>
            <person name="Goodwin L.A."/>
            <person name="Green L.D."/>
            <person name="Han C.S."/>
            <person name="Hill K.K."/>
            <person name="Hitchcock P."/>
            <person name="Jackson P.J."/>
            <person name="Keim P."/>
            <person name="Kewalramani A.R."/>
            <person name="Longmire J."/>
            <person name="Lucas S."/>
            <person name="Malfatti S."/>
            <person name="Martinez D."/>
            <person name="McMurry K."/>
            <person name="Meincke L.J."/>
            <person name="Misra M."/>
            <person name="Moseman B.L."/>
            <person name="Mundt M."/>
            <person name="Munk A.C."/>
            <person name="Okinaka R.T."/>
            <person name="Parson-Quintana B."/>
            <person name="Reilly L.P."/>
            <person name="Richardson P."/>
            <person name="Robinson D.L."/>
            <person name="Saunders E."/>
            <person name="Tapia R."/>
            <person name="Tesmer J.G."/>
            <person name="Thayer N."/>
            <person name="Thompson L.S."/>
            <person name="Tice H."/>
            <person name="Ticknor L.O."/>
            <person name="Wills P.L."/>
            <person name="Gilna P."/>
            <person name="Brettin T.S."/>
        </authorList>
    </citation>
    <scope>NUCLEOTIDE SEQUENCE [LARGE SCALE GENOMIC DNA]</scope>
    <source>
        <strain>Al Hakam</strain>
    </source>
</reference>
<protein>
    <recommendedName>
        <fullName evidence="2">Elongation factor Tu</fullName>
        <shortName evidence="2">EF-Tu</shortName>
        <ecNumber evidence="2">3.6.5.3</ecNumber>
    </recommendedName>
</protein>
<feature type="chain" id="PRO_1000015604" description="Elongation factor Tu">
    <location>
        <begin position="1"/>
        <end position="395"/>
    </location>
</feature>
<feature type="domain" description="tr-type G">
    <location>
        <begin position="10"/>
        <end position="204"/>
    </location>
</feature>
<feature type="region of interest" description="G1" evidence="1">
    <location>
        <begin position="19"/>
        <end position="26"/>
    </location>
</feature>
<feature type="region of interest" description="G2" evidence="1">
    <location>
        <begin position="60"/>
        <end position="64"/>
    </location>
</feature>
<feature type="region of interest" description="G3" evidence="1">
    <location>
        <begin position="81"/>
        <end position="84"/>
    </location>
</feature>
<feature type="region of interest" description="G4" evidence="1">
    <location>
        <begin position="136"/>
        <end position="139"/>
    </location>
</feature>
<feature type="region of interest" description="G5" evidence="1">
    <location>
        <begin position="174"/>
        <end position="176"/>
    </location>
</feature>
<feature type="binding site" evidence="2">
    <location>
        <begin position="19"/>
        <end position="26"/>
    </location>
    <ligand>
        <name>GTP</name>
        <dbReference type="ChEBI" id="CHEBI:37565"/>
    </ligand>
</feature>
<feature type="binding site" evidence="2">
    <location>
        <position position="26"/>
    </location>
    <ligand>
        <name>Mg(2+)</name>
        <dbReference type="ChEBI" id="CHEBI:18420"/>
    </ligand>
</feature>
<feature type="binding site" evidence="2">
    <location>
        <begin position="81"/>
        <end position="85"/>
    </location>
    <ligand>
        <name>GTP</name>
        <dbReference type="ChEBI" id="CHEBI:37565"/>
    </ligand>
</feature>
<feature type="binding site" evidence="2">
    <location>
        <begin position="136"/>
        <end position="139"/>
    </location>
    <ligand>
        <name>GTP</name>
        <dbReference type="ChEBI" id="CHEBI:37565"/>
    </ligand>
</feature>
<name>EFTU_BACAH</name>